<protein>
    <recommendedName>
        <fullName evidence="5">H/ACA ribonucleoprotein complex subunit 2</fullName>
    </recommendedName>
    <alternativeName>
        <fullName>H/ACA snoRNP protein NHP2</fullName>
    </alternativeName>
    <alternativeName>
        <fullName>Nucleolar protein family A member 2-like protein</fullName>
    </alternativeName>
</protein>
<comment type="function">
    <text evidence="1 2 4 5 6">Component of the box H/ACA small nucleolar ribonucleoprotein (H/ACA snoRNP) complex, which catalyzes pseudouridylation of rRNA (Probable). This involves the isomerization of uridine such that the ribose is subsequently attached to C5, instead of the normal N1 (Probable). Pseudouridine ('psi') residues may serve to stabilize the conformation of rRNAs (Probable). Required for ribosome biogenesis (By similarity). H/ACA snoRNP complex-dependent ribosome biogenesis is important in female germline cell differentiation during oogenesis (PubMed:37343092).</text>
</comment>
<comment type="subunit">
    <text evidence="6">Component of the box H/ACA small nucleolar ribonucleoprotein (H/ACA snoRNP) complex consisting of Nop60B, Gar1, NPH2 and Nop10, and associated with H/ACA-type snoRNAs.</text>
</comment>
<comment type="subcellular location">
    <subcellularLocation>
        <location evidence="1">Nucleus</location>
        <location evidence="1">Nucleolus</location>
    </subcellularLocation>
</comment>
<comment type="disruption phenotype">
    <text evidence="4">RNAi-mediated knockdown in female germline cells results in a cyst differentiation defect that prevents progression from the 8-cell cyst stage and oocyte differentiation.</text>
</comment>
<comment type="similarity">
    <text evidence="5">Belongs to the eukaryotic ribosomal protein eL8 family.</text>
</comment>
<accession>Q9V3U2</accession>
<accession>Q494M4</accession>
<name>NHP2_DROME</name>
<proteinExistence type="evidence at protein level"/>
<gene>
    <name evidence="7" type="primary">NHP2</name>
    <name evidence="7" type="ORF">CG5258</name>
</gene>
<reference key="1">
    <citation type="submission" date="1999-12" db="EMBL/GenBank/DDBJ databases">
        <title>Sequencing of the NHP2 gene of Drosophila.</title>
        <authorList>
            <person name="Renault A.D."/>
            <person name="Axton J.M."/>
        </authorList>
    </citation>
    <scope>NUCLEOTIDE SEQUENCE [GENOMIC DNA]</scope>
    <source>
        <strain>Oregon-R</strain>
    </source>
</reference>
<reference key="2">
    <citation type="journal article" date="2000" name="Science">
        <title>The genome sequence of Drosophila melanogaster.</title>
        <authorList>
            <person name="Adams M.D."/>
            <person name="Celniker S.E."/>
            <person name="Holt R.A."/>
            <person name="Evans C.A."/>
            <person name="Gocayne J.D."/>
            <person name="Amanatides P.G."/>
            <person name="Scherer S.E."/>
            <person name="Li P.W."/>
            <person name="Hoskins R.A."/>
            <person name="Galle R.F."/>
            <person name="George R.A."/>
            <person name="Lewis S.E."/>
            <person name="Richards S."/>
            <person name="Ashburner M."/>
            <person name="Henderson S.N."/>
            <person name="Sutton G.G."/>
            <person name="Wortman J.R."/>
            <person name="Yandell M.D."/>
            <person name="Zhang Q."/>
            <person name="Chen L.X."/>
            <person name="Brandon R.C."/>
            <person name="Rogers Y.-H.C."/>
            <person name="Blazej R.G."/>
            <person name="Champe M."/>
            <person name="Pfeiffer B.D."/>
            <person name="Wan K.H."/>
            <person name="Doyle C."/>
            <person name="Baxter E.G."/>
            <person name="Helt G."/>
            <person name="Nelson C.R."/>
            <person name="Miklos G.L.G."/>
            <person name="Abril J.F."/>
            <person name="Agbayani A."/>
            <person name="An H.-J."/>
            <person name="Andrews-Pfannkoch C."/>
            <person name="Baldwin D."/>
            <person name="Ballew R.M."/>
            <person name="Basu A."/>
            <person name="Baxendale J."/>
            <person name="Bayraktaroglu L."/>
            <person name="Beasley E.M."/>
            <person name="Beeson K.Y."/>
            <person name="Benos P.V."/>
            <person name="Berman B.P."/>
            <person name="Bhandari D."/>
            <person name="Bolshakov S."/>
            <person name="Borkova D."/>
            <person name="Botchan M.R."/>
            <person name="Bouck J."/>
            <person name="Brokstein P."/>
            <person name="Brottier P."/>
            <person name="Burtis K.C."/>
            <person name="Busam D.A."/>
            <person name="Butler H."/>
            <person name="Cadieu E."/>
            <person name="Center A."/>
            <person name="Chandra I."/>
            <person name="Cherry J.M."/>
            <person name="Cawley S."/>
            <person name="Dahlke C."/>
            <person name="Davenport L.B."/>
            <person name="Davies P."/>
            <person name="de Pablos B."/>
            <person name="Delcher A."/>
            <person name="Deng Z."/>
            <person name="Mays A.D."/>
            <person name="Dew I."/>
            <person name="Dietz S.M."/>
            <person name="Dodson K."/>
            <person name="Doup L.E."/>
            <person name="Downes M."/>
            <person name="Dugan-Rocha S."/>
            <person name="Dunkov B.C."/>
            <person name="Dunn P."/>
            <person name="Durbin K.J."/>
            <person name="Evangelista C.C."/>
            <person name="Ferraz C."/>
            <person name="Ferriera S."/>
            <person name="Fleischmann W."/>
            <person name="Fosler C."/>
            <person name="Gabrielian A.E."/>
            <person name="Garg N.S."/>
            <person name="Gelbart W.M."/>
            <person name="Glasser K."/>
            <person name="Glodek A."/>
            <person name="Gong F."/>
            <person name="Gorrell J.H."/>
            <person name="Gu Z."/>
            <person name="Guan P."/>
            <person name="Harris M."/>
            <person name="Harris N.L."/>
            <person name="Harvey D.A."/>
            <person name="Heiman T.J."/>
            <person name="Hernandez J.R."/>
            <person name="Houck J."/>
            <person name="Hostin D."/>
            <person name="Houston K.A."/>
            <person name="Howland T.J."/>
            <person name="Wei M.-H."/>
            <person name="Ibegwam C."/>
            <person name="Jalali M."/>
            <person name="Kalush F."/>
            <person name="Karpen G.H."/>
            <person name="Ke Z."/>
            <person name="Kennison J.A."/>
            <person name="Ketchum K.A."/>
            <person name="Kimmel B.E."/>
            <person name="Kodira C.D."/>
            <person name="Kraft C.L."/>
            <person name="Kravitz S."/>
            <person name="Kulp D."/>
            <person name="Lai Z."/>
            <person name="Lasko P."/>
            <person name="Lei Y."/>
            <person name="Levitsky A.A."/>
            <person name="Li J.H."/>
            <person name="Li Z."/>
            <person name="Liang Y."/>
            <person name="Lin X."/>
            <person name="Liu X."/>
            <person name="Mattei B."/>
            <person name="McIntosh T.C."/>
            <person name="McLeod M.P."/>
            <person name="McPherson D."/>
            <person name="Merkulov G."/>
            <person name="Milshina N.V."/>
            <person name="Mobarry C."/>
            <person name="Morris J."/>
            <person name="Moshrefi A."/>
            <person name="Mount S.M."/>
            <person name="Moy M."/>
            <person name="Murphy B."/>
            <person name="Murphy L."/>
            <person name="Muzny D.M."/>
            <person name="Nelson D.L."/>
            <person name="Nelson D.R."/>
            <person name="Nelson K.A."/>
            <person name="Nixon K."/>
            <person name="Nusskern D.R."/>
            <person name="Pacleb J.M."/>
            <person name="Palazzolo M."/>
            <person name="Pittman G.S."/>
            <person name="Pan S."/>
            <person name="Pollard J."/>
            <person name="Puri V."/>
            <person name="Reese M.G."/>
            <person name="Reinert K."/>
            <person name="Remington K."/>
            <person name="Saunders R.D.C."/>
            <person name="Scheeler F."/>
            <person name="Shen H."/>
            <person name="Shue B.C."/>
            <person name="Siden-Kiamos I."/>
            <person name="Simpson M."/>
            <person name="Skupski M.P."/>
            <person name="Smith T.J."/>
            <person name="Spier E."/>
            <person name="Spradling A.C."/>
            <person name="Stapleton M."/>
            <person name="Strong R."/>
            <person name="Sun E."/>
            <person name="Svirskas R."/>
            <person name="Tector C."/>
            <person name="Turner R."/>
            <person name="Venter E."/>
            <person name="Wang A.H."/>
            <person name="Wang X."/>
            <person name="Wang Z.-Y."/>
            <person name="Wassarman D.A."/>
            <person name="Weinstock G.M."/>
            <person name="Weissenbach J."/>
            <person name="Williams S.M."/>
            <person name="Woodage T."/>
            <person name="Worley K.C."/>
            <person name="Wu D."/>
            <person name="Yang S."/>
            <person name="Yao Q.A."/>
            <person name="Ye J."/>
            <person name="Yeh R.-F."/>
            <person name="Zaveri J.S."/>
            <person name="Zhan M."/>
            <person name="Zhang G."/>
            <person name="Zhao Q."/>
            <person name="Zheng L."/>
            <person name="Zheng X.H."/>
            <person name="Zhong F.N."/>
            <person name="Zhong W."/>
            <person name="Zhou X."/>
            <person name="Zhu S.C."/>
            <person name="Zhu X."/>
            <person name="Smith H.O."/>
            <person name="Gibbs R.A."/>
            <person name="Myers E.W."/>
            <person name="Rubin G.M."/>
            <person name="Venter J.C."/>
        </authorList>
    </citation>
    <scope>NUCLEOTIDE SEQUENCE [LARGE SCALE GENOMIC DNA]</scope>
    <source>
        <strain>Berkeley</strain>
    </source>
</reference>
<reference key="3">
    <citation type="journal article" date="2002" name="Genome Biol.">
        <title>Annotation of the Drosophila melanogaster euchromatic genome: a systematic review.</title>
        <authorList>
            <person name="Misra S."/>
            <person name="Crosby M.A."/>
            <person name="Mungall C.J."/>
            <person name="Matthews B.B."/>
            <person name="Campbell K.S."/>
            <person name="Hradecky P."/>
            <person name="Huang Y."/>
            <person name="Kaminker J.S."/>
            <person name="Millburn G.H."/>
            <person name="Prochnik S.E."/>
            <person name="Smith C.D."/>
            <person name="Tupy J.L."/>
            <person name="Whitfield E.J."/>
            <person name="Bayraktaroglu L."/>
            <person name="Berman B.P."/>
            <person name="Bettencourt B.R."/>
            <person name="Celniker S.E."/>
            <person name="de Grey A.D.N.J."/>
            <person name="Drysdale R.A."/>
            <person name="Harris N.L."/>
            <person name="Richter J."/>
            <person name="Russo S."/>
            <person name="Schroeder A.J."/>
            <person name="Shu S.Q."/>
            <person name="Stapleton M."/>
            <person name="Yamada C."/>
            <person name="Ashburner M."/>
            <person name="Gelbart W.M."/>
            <person name="Rubin G.M."/>
            <person name="Lewis S.E."/>
        </authorList>
    </citation>
    <scope>GENOME REANNOTATION</scope>
    <source>
        <strain>Berkeley</strain>
    </source>
</reference>
<reference key="4">
    <citation type="submission" date="2005-08" db="EMBL/GenBank/DDBJ databases">
        <authorList>
            <person name="Stapleton M."/>
            <person name="Carlson J.W."/>
            <person name="Chavez C."/>
            <person name="Frise E."/>
            <person name="George R.A."/>
            <person name="Pacleb J.M."/>
            <person name="Park S."/>
            <person name="Wan K.H."/>
            <person name="Yu C."/>
            <person name="Celniker S.E."/>
        </authorList>
    </citation>
    <scope>NUCLEOTIDE SEQUENCE [LARGE SCALE MRNA]</scope>
    <source>
        <strain>Berkeley</strain>
        <tissue>Head</tissue>
    </source>
</reference>
<reference key="5">
    <citation type="journal article" date="2008" name="J. Proteome Res.">
        <title>Phosphoproteome analysis of Drosophila melanogaster embryos.</title>
        <authorList>
            <person name="Zhai B."/>
            <person name="Villen J."/>
            <person name="Beausoleil S.A."/>
            <person name="Mintseris J."/>
            <person name="Gygi S.P."/>
        </authorList>
    </citation>
    <scope>PHOSPHORYLATION [LARGE SCALE ANALYSIS] AT SER-15 AND THR-23</scope>
    <scope>IDENTIFICATION BY MASS SPECTROMETRY</scope>
    <source>
        <tissue>Embryo</tissue>
    </source>
</reference>
<reference key="6">
    <citation type="journal article" date="2023" name="Sci. Adv.">
        <title>H/ACA snRNP-dependent ribosome biogenesis regulates translation of polyglutamine proteins.</title>
        <authorList>
            <person name="Breznak S.M."/>
            <person name="Peng Y."/>
            <person name="Deng L."/>
            <person name="Kotb N.M."/>
            <person name="Flamholz Z."/>
            <person name="Rapisarda I.T."/>
            <person name="Martin E.T."/>
            <person name="LaBarge K.A."/>
            <person name="Fabris D."/>
            <person name="Gavis E.R."/>
            <person name="Rangan P."/>
        </authorList>
    </citation>
    <scope>FUNCTION</scope>
    <scope>SUBUNIT</scope>
    <scope>DISRUPTION PHENOTYPE</scope>
</reference>
<feature type="chain" id="PRO_0000136772" description="H/ACA ribonucleoprotein complex subunit 2">
    <location>
        <begin position="1"/>
        <end position="160"/>
    </location>
</feature>
<feature type="modified residue" description="Phosphoserine" evidence="3">
    <location>
        <position position="15"/>
    </location>
</feature>
<feature type="modified residue" description="Phosphothreonine" evidence="3">
    <location>
        <position position="23"/>
    </location>
</feature>
<keyword id="KW-0539">Nucleus</keyword>
<keyword id="KW-0597">Phosphoprotein</keyword>
<keyword id="KW-1185">Reference proteome</keyword>
<keyword id="KW-0687">Ribonucleoprotein</keyword>
<keyword id="KW-0690">Ribosome biogenesis</keyword>
<keyword id="KW-0694">RNA-binding</keyword>
<keyword id="KW-0698">rRNA processing</keyword>
<evidence type="ECO:0000250" key="1"/>
<evidence type="ECO:0000250" key="2">
    <source>
        <dbReference type="UniProtKB" id="Q9NX24"/>
    </source>
</evidence>
<evidence type="ECO:0000269" key="3">
    <source>
    </source>
</evidence>
<evidence type="ECO:0000269" key="4">
    <source>
    </source>
</evidence>
<evidence type="ECO:0000305" key="5"/>
<evidence type="ECO:0000305" key="6">
    <source>
    </source>
</evidence>
<evidence type="ECO:0000312" key="7">
    <source>
        <dbReference type="FlyBase" id="FBgn0029148"/>
    </source>
</evidence>
<organism evidence="7">
    <name type="scientific">Drosophila melanogaster</name>
    <name type="common">Fruit fly</name>
    <dbReference type="NCBI Taxonomy" id="7227"/>
    <lineage>
        <taxon>Eukaryota</taxon>
        <taxon>Metazoa</taxon>
        <taxon>Ecdysozoa</taxon>
        <taxon>Arthropoda</taxon>
        <taxon>Hexapoda</taxon>
        <taxon>Insecta</taxon>
        <taxon>Pterygota</taxon>
        <taxon>Neoptera</taxon>
        <taxon>Endopterygota</taxon>
        <taxon>Diptera</taxon>
        <taxon>Brachycera</taxon>
        <taxon>Muscomorpha</taxon>
        <taxon>Ephydroidea</taxon>
        <taxon>Drosophilidae</taxon>
        <taxon>Drosophila</taxon>
        <taxon>Sophophora</taxon>
    </lineage>
</organism>
<sequence>MGKVKVERSEDADESVVASGDVTIKEEESYDDKLIFVNAIAKPMAGKKLAKKCYKLVKKAMKHKTFLRNGLKDVQTRLRKGETGICIFAGDVTPVDIMCHLPAVCEEKGIPYTYTPSRADLGAAMGVKRGTVALLVRQNEEYKDLYDEVKEELSALNIPV</sequence>
<dbReference type="EMBL" id="AE014296">
    <property type="protein sequence ID" value="AAF49701.1"/>
    <property type="molecule type" value="Genomic_DNA"/>
</dbReference>
<dbReference type="EMBL" id="AF217228">
    <property type="protein sequence ID" value="AAF27630.1"/>
    <property type="molecule type" value="Genomic_DNA"/>
</dbReference>
<dbReference type="EMBL" id="BT023752">
    <property type="protein sequence ID" value="AAZ41760.1"/>
    <property type="molecule type" value="mRNA"/>
</dbReference>
<dbReference type="RefSeq" id="NP_001261849.1">
    <property type="nucleotide sequence ID" value="NM_001274920.1"/>
</dbReference>
<dbReference type="RefSeq" id="NP_651965.1">
    <property type="nucleotide sequence ID" value="NM_143708.3"/>
</dbReference>
<dbReference type="SMR" id="Q9V3U2"/>
<dbReference type="BioGRID" id="68768">
    <property type="interactions" value="9"/>
</dbReference>
<dbReference type="ComplexPortal" id="CPX-2675">
    <property type="entry name" value="Box H/ACA ribonucleoprotein complex"/>
</dbReference>
<dbReference type="FunCoup" id="Q9V3U2">
    <property type="interactions" value="1314"/>
</dbReference>
<dbReference type="IntAct" id="Q9V3U2">
    <property type="interactions" value="104"/>
</dbReference>
<dbReference type="STRING" id="7227.FBpp0305289"/>
<dbReference type="iPTMnet" id="Q9V3U2"/>
<dbReference type="PaxDb" id="7227-FBpp0305289"/>
<dbReference type="DNASU" id="44005"/>
<dbReference type="EnsemblMetazoa" id="FBtr0075698">
    <property type="protein sequence ID" value="FBpp0075448"/>
    <property type="gene ID" value="FBgn0029148"/>
</dbReference>
<dbReference type="EnsemblMetazoa" id="FBtr0333076">
    <property type="protein sequence ID" value="FBpp0305289"/>
    <property type="gene ID" value="FBgn0029148"/>
</dbReference>
<dbReference type="GeneID" id="44005"/>
<dbReference type="KEGG" id="dme:Dmel_CG5258"/>
<dbReference type="UCSC" id="CG5258-RA">
    <property type="organism name" value="d. melanogaster"/>
</dbReference>
<dbReference type="AGR" id="FB:FBgn0029148"/>
<dbReference type="CTD" id="55651"/>
<dbReference type="FlyBase" id="FBgn0029148">
    <property type="gene designation" value="NHP2"/>
</dbReference>
<dbReference type="VEuPathDB" id="VectorBase:FBgn0029148"/>
<dbReference type="eggNOG" id="KOG3167">
    <property type="taxonomic scope" value="Eukaryota"/>
</dbReference>
<dbReference type="GeneTree" id="ENSGT00550000074939"/>
<dbReference type="HOGENOM" id="CLU_084513_1_0_1"/>
<dbReference type="InParanoid" id="Q9V3U2"/>
<dbReference type="OMA" id="EDNYEAR"/>
<dbReference type="OrthoDB" id="5364946at2759"/>
<dbReference type="PhylomeDB" id="Q9V3U2"/>
<dbReference type="SignaLink" id="Q9V3U2"/>
<dbReference type="BioGRID-ORCS" id="44005">
    <property type="hits" value="0 hits in 1 CRISPR screen"/>
</dbReference>
<dbReference type="GenomeRNAi" id="44005"/>
<dbReference type="PRO" id="PR:Q9V3U2"/>
<dbReference type="Proteomes" id="UP000000803">
    <property type="component" value="Chromosome 3L"/>
</dbReference>
<dbReference type="Bgee" id="FBgn0029148">
    <property type="expression patterns" value="Expressed in eye disc (Drosophila) and 137 other cell types or tissues"/>
</dbReference>
<dbReference type="ExpressionAtlas" id="Q9V3U2">
    <property type="expression patterns" value="baseline and differential"/>
</dbReference>
<dbReference type="GO" id="GO:0031429">
    <property type="term" value="C:box H/ACA snoRNP complex"/>
    <property type="evidence" value="ECO:0000318"/>
    <property type="project" value="GO_Central"/>
</dbReference>
<dbReference type="GO" id="GO:0005730">
    <property type="term" value="C:nucleolus"/>
    <property type="evidence" value="ECO:0000314"/>
    <property type="project" value="FlyBase"/>
</dbReference>
<dbReference type="GO" id="GO:0005732">
    <property type="term" value="C:sno(s)RNA-containing ribonucleoprotein complex"/>
    <property type="evidence" value="ECO:0000250"/>
    <property type="project" value="UniProtKB"/>
</dbReference>
<dbReference type="GO" id="GO:0034513">
    <property type="term" value="F:box H/ACA snoRNA binding"/>
    <property type="evidence" value="ECO:0000318"/>
    <property type="project" value="GO_Central"/>
</dbReference>
<dbReference type="GO" id="GO:0048142">
    <property type="term" value="P:germarium-derived cystoblast division"/>
    <property type="evidence" value="ECO:0000315"/>
    <property type="project" value="FlyBase"/>
</dbReference>
<dbReference type="GO" id="GO:0031118">
    <property type="term" value="P:rRNA pseudouridine synthesis"/>
    <property type="evidence" value="ECO:0000250"/>
    <property type="project" value="UniProtKB"/>
</dbReference>
<dbReference type="GO" id="GO:0031120">
    <property type="term" value="P:snRNA pseudouridine synthesis"/>
    <property type="evidence" value="ECO:0000318"/>
    <property type="project" value="GO_Central"/>
</dbReference>
<dbReference type="FunFam" id="3.30.1330.30:FF:000028">
    <property type="entry name" value="H/ACA ribonucleoprotein complex subunit 2-like protein"/>
    <property type="match status" value="1"/>
</dbReference>
<dbReference type="Gene3D" id="3.30.1330.30">
    <property type="match status" value="1"/>
</dbReference>
<dbReference type="InterPro" id="IPR050257">
    <property type="entry name" value="eL8/uL1-like"/>
</dbReference>
<dbReference type="InterPro" id="IPR029064">
    <property type="entry name" value="Ribosomal_eL30-like_sf"/>
</dbReference>
<dbReference type="InterPro" id="IPR004038">
    <property type="entry name" value="Ribosomal_eL8/eL30/eS12/Gad45"/>
</dbReference>
<dbReference type="InterPro" id="IPR018492">
    <property type="entry name" value="Ribosomal_eL8/Nhp2"/>
</dbReference>
<dbReference type="PANTHER" id="PTHR23105">
    <property type="entry name" value="RIBOSOMAL PROTEIN L7AE FAMILY MEMBER"/>
    <property type="match status" value="1"/>
</dbReference>
<dbReference type="Pfam" id="PF01248">
    <property type="entry name" value="Ribosomal_L7Ae"/>
    <property type="match status" value="1"/>
</dbReference>
<dbReference type="PRINTS" id="PR00881">
    <property type="entry name" value="L7ARS6FAMILY"/>
</dbReference>
<dbReference type="SUPFAM" id="SSF55315">
    <property type="entry name" value="L30e-like"/>
    <property type="match status" value="1"/>
</dbReference>